<comment type="catalytic activity">
    <reaction evidence="1">
        <text>1-(5-phospho-beta-D-ribosyl)-ATP + H2O = 1-(5-phospho-beta-D-ribosyl)-5'-AMP + diphosphate + H(+)</text>
        <dbReference type="Rhea" id="RHEA:22828"/>
        <dbReference type="ChEBI" id="CHEBI:15377"/>
        <dbReference type="ChEBI" id="CHEBI:15378"/>
        <dbReference type="ChEBI" id="CHEBI:33019"/>
        <dbReference type="ChEBI" id="CHEBI:59457"/>
        <dbReference type="ChEBI" id="CHEBI:73183"/>
        <dbReference type="EC" id="3.6.1.31"/>
    </reaction>
</comment>
<comment type="catalytic activity">
    <reaction evidence="1">
        <text>1-(5-phospho-beta-D-ribosyl)-5'-AMP + H2O = 1-(5-phospho-beta-D-ribosyl)-5-[(5-phospho-beta-D-ribosylamino)methylideneamino]imidazole-4-carboxamide</text>
        <dbReference type="Rhea" id="RHEA:20049"/>
        <dbReference type="ChEBI" id="CHEBI:15377"/>
        <dbReference type="ChEBI" id="CHEBI:58435"/>
        <dbReference type="ChEBI" id="CHEBI:59457"/>
        <dbReference type="EC" id="3.5.4.19"/>
    </reaction>
</comment>
<comment type="pathway">
    <text evidence="1">Amino-acid biosynthesis; L-histidine biosynthesis; L-histidine from 5-phospho-alpha-D-ribose 1-diphosphate: step 2/9.</text>
</comment>
<comment type="pathway">
    <text evidence="1">Amino-acid biosynthesis; L-histidine biosynthesis; L-histidine from 5-phospho-alpha-D-ribose 1-diphosphate: step 3/9.</text>
</comment>
<comment type="subcellular location">
    <subcellularLocation>
        <location evidence="1">Cytoplasm</location>
    </subcellularLocation>
</comment>
<comment type="similarity">
    <text evidence="1">In the N-terminal section; belongs to the PRA-CH family.</text>
</comment>
<comment type="similarity">
    <text evidence="1">In the C-terminal section; belongs to the PRA-PH family.</text>
</comment>
<keyword id="KW-0028">Amino-acid biosynthesis</keyword>
<keyword id="KW-0067">ATP-binding</keyword>
<keyword id="KW-0963">Cytoplasm</keyword>
<keyword id="KW-0368">Histidine biosynthesis</keyword>
<keyword id="KW-0378">Hydrolase</keyword>
<keyword id="KW-0511">Multifunctional enzyme</keyword>
<keyword id="KW-0547">Nucleotide-binding</keyword>
<reference key="1">
    <citation type="journal article" date="2004" name="Nat. Biotechnol.">
        <title>The genome sequence of the extreme thermophile Thermus thermophilus.</title>
        <authorList>
            <person name="Henne A."/>
            <person name="Brueggemann H."/>
            <person name="Raasch C."/>
            <person name="Wiezer A."/>
            <person name="Hartsch T."/>
            <person name="Liesegang H."/>
            <person name="Johann A."/>
            <person name="Lienard T."/>
            <person name="Gohl O."/>
            <person name="Martinez-Arias R."/>
            <person name="Jacobi C."/>
            <person name="Starkuviene V."/>
            <person name="Schlenczeck S."/>
            <person name="Dencker S."/>
            <person name="Huber R."/>
            <person name="Klenk H.-P."/>
            <person name="Kramer W."/>
            <person name="Merkl R."/>
            <person name="Gottschalk G."/>
            <person name="Fritz H.-J."/>
        </authorList>
    </citation>
    <scope>NUCLEOTIDE SEQUENCE [LARGE SCALE GENOMIC DNA]</scope>
    <source>
        <strain>ATCC BAA-163 / DSM 7039 / HB27</strain>
    </source>
</reference>
<name>HIS2_THET2</name>
<feature type="chain" id="PRO_0000136443" description="Histidine biosynthesis bifunctional protein HisIE">
    <location>
        <begin position="1"/>
        <end position="214"/>
    </location>
</feature>
<feature type="region of interest" description="Phosphoribosyl-AMP cyclohydrolase">
    <location>
        <begin position="1"/>
        <end position="114"/>
    </location>
</feature>
<feature type="region of interest" description="Phosphoribosyl-ATP pyrophosphohydrolase">
    <location>
        <begin position="115"/>
        <end position="214"/>
    </location>
</feature>
<proteinExistence type="inferred from homology"/>
<evidence type="ECO:0000255" key="1">
    <source>
        <dbReference type="HAMAP-Rule" id="MF_01019"/>
    </source>
</evidence>
<dbReference type="EC" id="3.5.4.19" evidence="1"/>
<dbReference type="EC" id="3.6.1.31" evidence="1"/>
<dbReference type="EMBL" id="AE017221">
    <property type="protein sequence ID" value="AAS81422.1"/>
    <property type="molecule type" value="Genomic_DNA"/>
</dbReference>
<dbReference type="RefSeq" id="WP_011173496.1">
    <property type="nucleotide sequence ID" value="NC_005835.1"/>
</dbReference>
<dbReference type="SMR" id="P62350"/>
<dbReference type="KEGG" id="tth:TT_C1080"/>
<dbReference type="eggNOG" id="COG0139">
    <property type="taxonomic scope" value="Bacteria"/>
</dbReference>
<dbReference type="eggNOG" id="COG0140">
    <property type="taxonomic scope" value="Bacteria"/>
</dbReference>
<dbReference type="HOGENOM" id="CLU_048577_3_1_0"/>
<dbReference type="OrthoDB" id="9795769at2"/>
<dbReference type="UniPathway" id="UPA00031">
    <property type="reaction ID" value="UER00007"/>
</dbReference>
<dbReference type="UniPathway" id="UPA00031">
    <property type="reaction ID" value="UER00008"/>
</dbReference>
<dbReference type="Proteomes" id="UP000000592">
    <property type="component" value="Chromosome"/>
</dbReference>
<dbReference type="GO" id="GO:0005737">
    <property type="term" value="C:cytoplasm"/>
    <property type="evidence" value="ECO:0007669"/>
    <property type="project" value="UniProtKB-SubCell"/>
</dbReference>
<dbReference type="GO" id="GO:0005524">
    <property type="term" value="F:ATP binding"/>
    <property type="evidence" value="ECO:0007669"/>
    <property type="project" value="UniProtKB-KW"/>
</dbReference>
<dbReference type="GO" id="GO:0004635">
    <property type="term" value="F:phosphoribosyl-AMP cyclohydrolase activity"/>
    <property type="evidence" value="ECO:0007669"/>
    <property type="project" value="UniProtKB-UniRule"/>
</dbReference>
<dbReference type="GO" id="GO:0004636">
    <property type="term" value="F:phosphoribosyl-ATP diphosphatase activity"/>
    <property type="evidence" value="ECO:0007669"/>
    <property type="project" value="UniProtKB-UniRule"/>
</dbReference>
<dbReference type="GO" id="GO:0000105">
    <property type="term" value="P:L-histidine biosynthetic process"/>
    <property type="evidence" value="ECO:0007669"/>
    <property type="project" value="UniProtKB-UniRule"/>
</dbReference>
<dbReference type="CDD" id="cd11534">
    <property type="entry name" value="NTP-PPase_HisIE_like"/>
    <property type="match status" value="1"/>
</dbReference>
<dbReference type="FunFam" id="3.10.20.810:FF:000001">
    <property type="entry name" value="Histidine biosynthesis bifunctional protein HisIE"/>
    <property type="match status" value="1"/>
</dbReference>
<dbReference type="Gene3D" id="1.10.287.1080">
    <property type="entry name" value="MazG-like"/>
    <property type="match status" value="1"/>
</dbReference>
<dbReference type="Gene3D" id="3.10.20.810">
    <property type="entry name" value="Phosphoribosyl-AMP cyclohydrolase"/>
    <property type="match status" value="1"/>
</dbReference>
<dbReference type="HAMAP" id="MF_01020">
    <property type="entry name" value="HisE"/>
    <property type="match status" value="1"/>
</dbReference>
<dbReference type="HAMAP" id="MF_01021">
    <property type="entry name" value="HisI"/>
    <property type="match status" value="1"/>
</dbReference>
<dbReference type="HAMAP" id="MF_01019">
    <property type="entry name" value="HisIE"/>
    <property type="match status" value="1"/>
</dbReference>
<dbReference type="InterPro" id="IPR023019">
    <property type="entry name" value="His_synth_HisIE"/>
</dbReference>
<dbReference type="InterPro" id="IPR008179">
    <property type="entry name" value="HisE"/>
</dbReference>
<dbReference type="InterPro" id="IPR026660">
    <property type="entry name" value="PRA-CH"/>
</dbReference>
<dbReference type="InterPro" id="IPR021130">
    <property type="entry name" value="PRib-ATP_PPHydrolase-like"/>
</dbReference>
<dbReference type="InterPro" id="IPR002496">
    <property type="entry name" value="PRib_AMP_CycHydrolase_dom"/>
</dbReference>
<dbReference type="InterPro" id="IPR038019">
    <property type="entry name" value="PRib_AMP_CycHydrolase_sf"/>
</dbReference>
<dbReference type="NCBIfam" id="TIGR03188">
    <property type="entry name" value="histidine_hisI"/>
    <property type="match status" value="1"/>
</dbReference>
<dbReference type="NCBIfam" id="NF000768">
    <property type="entry name" value="PRK00051.1"/>
    <property type="match status" value="1"/>
</dbReference>
<dbReference type="NCBIfam" id="NF002747">
    <property type="entry name" value="PRK02759.1"/>
    <property type="match status" value="1"/>
</dbReference>
<dbReference type="PANTHER" id="PTHR42945">
    <property type="entry name" value="HISTIDINE BIOSYNTHESIS BIFUNCTIONAL PROTEIN"/>
    <property type="match status" value="1"/>
</dbReference>
<dbReference type="PANTHER" id="PTHR42945:SF1">
    <property type="entry name" value="HISTIDINE BIOSYNTHESIS BIFUNCTIONAL PROTEIN HIS7"/>
    <property type="match status" value="1"/>
</dbReference>
<dbReference type="Pfam" id="PF01502">
    <property type="entry name" value="PRA-CH"/>
    <property type="match status" value="1"/>
</dbReference>
<dbReference type="Pfam" id="PF01503">
    <property type="entry name" value="PRA-PH"/>
    <property type="match status" value="1"/>
</dbReference>
<dbReference type="SUPFAM" id="SSF101386">
    <property type="entry name" value="all-alpha NTP pyrophosphatases"/>
    <property type="match status" value="1"/>
</dbReference>
<dbReference type="SUPFAM" id="SSF141734">
    <property type="entry name" value="HisI-like"/>
    <property type="match status" value="1"/>
</dbReference>
<gene>
    <name evidence="1" type="primary">hisI</name>
    <name evidence="1" type="synonym">hisIE</name>
    <name type="ordered locus">TT_C1080</name>
</gene>
<organism>
    <name type="scientific">Thermus thermophilus (strain ATCC BAA-163 / DSM 7039 / HB27)</name>
    <dbReference type="NCBI Taxonomy" id="262724"/>
    <lineage>
        <taxon>Bacteria</taxon>
        <taxon>Thermotogati</taxon>
        <taxon>Deinococcota</taxon>
        <taxon>Deinococci</taxon>
        <taxon>Thermales</taxon>
        <taxon>Thermaceae</taxon>
        <taxon>Thermus</taxon>
    </lineage>
</organism>
<accession>P62350</accession>
<sequence length="214" mass="24005">MDLSAVRFDEKGLVPVVVQDARTGEVLTLAYANREALEETLRTRRSTFFSRSRQALWRKGETSGHTQEVVEVLLDCDGDAVVYRVLPQGPACHTGERTCFHRALLEGEKDLGFVVGQVYATIKERLRTLPEGSYVARMHHAGLDRILKKIGEEAGEVILAAKNQNPEELRHEAADLLFHLLLTLAELGLTPEDLAKTLWERHRPRSPYDGSHGN</sequence>
<protein>
    <recommendedName>
        <fullName evidence="1">Histidine biosynthesis bifunctional protein HisIE</fullName>
    </recommendedName>
    <domain>
        <recommendedName>
            <fullName evidence="1">Phosphoribosyl-AMP cyclohydrolase</fullName>
            <shortName evidence="1">PRA-CH</shortName>
            <ecNumber evidence="1">3.5.4.19</ecNumber>
        </recommendedName>
    </domain>
    <domain>
        <recommendedName>
            <fullName evidence="1">Phosphoribosyl-ATP pyrophosphatase</fullName>
            <shortName evidence="1">PRA-PH</shortName>
            <ecNumber evidence="1">3.6.1.31</ecNumber>
        </recommendedName>
    </domain>
</protein>